<gene>
    <name evidence="3" type="primary">tcpD</name>
    <name type="ORF">CPUR_02678</name>
</gene>
<comment type="function">
    <text evidence="2">4-O-dimethylallyl-L-tyrosine synthase; part of the gene cluster that mediates the biosynthesis of an unusual class of epipolythiodioxopiperazines (ETPs) lacking the reactive thiol group important for toxicity (PubMed:27390873). Firstly, L-tyrosine is prenylated by tcpD, before undergoing condensation with L-glycine in a reaction catalyzed by the NRPS tcpP leading to the diketopiperazine (DKP) backbone (PubMed:27390873). Afterwards the alpha-carbon of tyrosine is oxidized by the cytochrome P450 tcpC to form a hydroxyl group (PubMed:27390873). However, in contrast other ETP biosynthesis pathways studied so far, tcpC is not able to bishydroxylate the DKP at both alpha-carbon positions, but hydroxylates the alpha-carbon of the tyrosine part and the nitrogen of the glycine part (PubMed:27390873). The next steps involve an alpha,beta-elimination reaction catalyzed by tcpI, a methylation by the methyltransferase tcpN the action of the four enzyme cascade tcpG/K/J/I (PubMed:27390873). Due to a dysfunctional cytochrome P450 monooxygenase tcpC, the pathway leads to the biosynthesis of probable non-toxic metabolites lacking the reactive thiol group (PubMed:27390873).</text>
</comment>
<comment type="catalytic activity">
    <reaction evidence="1">
        <text>L-tyrosine + dimethylallyl diphosphate = 4-O-dimethylallyl-L-tyrosine + diphosphate</text>
        <dbReference type="Rhea" id="RHEA:41584"/>
        <dbReference type="ChEBI" id="CHEBI:33019"/>
        <dbReference type="ChEBI" id="CHEBI:57623"/>
        <dbReference type="ChEBI" id="CHEBI:58315"/>
        <dbReference type="ChEBI" id="CHEBI:78314"/>
        <dbReference type="EC" id="2.5.1.122"/>
    </reaction>
</comment>
<comment type="subunit">
    <text evidence="1">Homodimer.</text>
</comment>
<comment type="induction">
    <text evidence="2">Expression is positively regulated by the thioclapurine cluster-specific transcription factor tcpZ (PubMed:27390873).</text>
</comment>
<comment type="similarity">
    <text evidence="4">Belongs to the tryptophan dimethylallyltransferase family.</text>
</comment>
<feature type="chain" id="PRO_0000437699" description="4-O-dimethylallyl-L-tyrosine synthase">
    <location>
        <begin position="1"/>
        <end position="444"/>
    </location>
</feature>
<sequence>MPFMFETILSRVKWTANTLVARLTTLYEYEYPRTAKEETGIDKEYHIKLWDEDIGAMLVSMMRLAGYSEQSQKTHRIFFKEQVARSLGLYPTTYPHQSAWESFMTDDHTPVEMSWSWSGNTPTPVVRYAAEPISWHAGTASDPLNSEATTECLASTAPLAPSLDLRWYRHFLKHLVADDSDGQHDTTDHLSQEFIAFDLDKDSMTVKYYFLPTLKSLACGKTNLELMEESILSLPEADEAVRSSLKVLTTYIRAYPQDEQPQAEIFAVDCVNPANSRLKIYVRSRKTTFDSMLEMMTLGGQTPDLTRDAIDSLRELWCACFALPNNPSVTSKPLRSKEHRTGGLLYYFELRPGAALPTSKVYLPVRHYGKTDDQIARGLSSYLYKRGQCLEGGLSYYEGVRRICKHRSLKQGLGFQTYITCAVKKGVVSVNAYFNPETCQYSRG</sequence>
<dbReference type="EC" id="2.5.1.122" evidence="1"/>
<dbReference type="EMBL" id="CAGA01000011">
    <property type="protein sequence ID" value="CCE28987.1"/>
    <property type="molecule type" value="Genomic_DNA"/>
</dbReference>
<dbReference type="SMR" id="M1VV66"/>
<dbReference type="STRING" id="1111077.M1VV66"/>
<dbReference type="VEuPathDB" id="FungiDB:CPUR_02678"/>
<dbReference type="eggNOG" id="ENOG502S2XP">
    <property type="taxonomic scope" value="Eukaryota"/>
</dbReference>
<dbReference type="HOGENOM" id="CLU_037431_2_2_1"/>
<dbReference type="OrthoDB" id="3354387at2759"/>
<dbReference type="Proteomes" id="UP000016801">
    <property type="component" value="Unassembled WGS sequence"/>
</dbReference>
<dbReference type="GO" id="GO:0016765">
    <property type="term" value="F:transferase activity, transferring alkyl or aryl (other than methyl) groups"/>
    <property type="evidence" value="ECO:0007669"/>
    <property type="project" value="InterPro"/>
</dbReference>
<dbReference type="GO" id="GO:0009820">
    <property type="term" value="P:alkaloid metabolic process"/>
    <property type="evidence" value="ECO:0007669"/>
    <property type="project" value="InterPro"/>
</dbReference>
<dbReference type="CDD" id="cd13929">
    <property type="entry name" value="PT-DMATS_CymD"/>
    <property type="match status" value="1"/>
</dbReference>
<dbReference type="InterPro" id="IPR033964">
    <property type="entry name" value="Aro_prenylTrfase"/>
</dbReference>
<dbReference type="InterPro" id="IPR017795">
    <property type="entry name" value="Aro_prenylTrfase_DMATS"/>
</dbReference>
<dbReference type="InterPro" id="IPR012148">
    <property type="entry name" value="DMATS-type_fun"/>
</dbReference>
<dbReference type="NCBIfam" id="TIGR03429">
    <property type="entry name" value="arom_pren_DMATS"/>
    <property type="match status" value="1"/>
</dbReference>
<dbReference type="PANTHER" id="PTHR40627">
    <property type="entry name" value="INDOLE PRENYLTRANSFERASE TDIB-RELATED"/>
    <property type="match status" value="1"/>
</dbReference>
<dbReference type="PANTHER" id="PTHR40627:SF4">
    <property type="entry name" value="PRENYLTRANSFERASE ASQH1-RELATED"/>
    <property type="match status" value="1"/>
</dbReference>
<dbReference type="Pfam" id="PF11991">
    <property type="entry name" value="Trp_DMAT"/>
    <property type="match status" value="1"/>
</dbReference>
<dbReference type="PIRSF" id="PIRSF000509">
    <property type="entry name" value="Trp_DMAT"/>
    <property type="match status" value="1"/>
</dbReference>
<dbReference type="SFLD" id="SFLDS00036">
    <property type="entry name" value="Aromatic_Prenyltransferase"/>
    <property type="match status" value="1"/>
</dbReference>
<dbReference type="SFLD" id="SFLDG01162">
    <property type="entry name" value="I"/>
    <property type="match status" value="1"/>
</dbReference>
<proteinExistence type="evidence at transcript level"/>
<name>TCPD_CLAP2</name>
<evidence type="ECO:0000250" key="1">
    <source>
        <dbReference type="UniProtKB" id="Q6Q874"/>
    </source>
</evidence>
<evidence type="ECO:0000269" key="2">
    <source>
    </source>
</evidence>
<evidence type="ECO:0000303" key="3">
    <source>
    </source>
</evidence>
<evidence type="ECO:0000305" key="4"/>
<protein>
    <recommendedName>
        <fullName evidence="1">4-O-dimethylallyl-L-tyrosine synthase</fullName>
        <ecNumber evidence="1">2.5.1.122</ecNumber>
    </recommendedName>
    <alternativeName>
        <fullName evidence="3">Thioclapurine biosynthesis protein D</fullName>
    </alternativeName>
    <alternativeName>
        <fullName evidence="1">Tyrosine O-prenyltransferase tcpD</fullName>
    </alternativeName>
</protein>
<organism>
    <name type="scientific">Claviceps purpurea (strain 20.1)</name>
    <name type="common">Ergot fungus</name>
    <name type="synonym">Sphacelia segetum</name>
    <dbReference type="NCBI Taxonomy" id="1111077"/>
    <lineage>
        <taxon>Eukaryota</taxon>
        <taxon>Fungi</taxon>
        <taxon>Dikarya</taxon>
        <taxon>Ascomycota</taxon>
        <taxon>Pezizomycotina</taxon>
        <taxon>Sordariomycetes</taxon>
        <taxon>Hypocreomycetidae</taxon>
        <taxon>Hypocreales</taxon>
        <taxon>Clavicipitaceae</taxon>
        <taxon>Claviceps</taxon>
    </lineage>
</organism>
<accession>M1VV66</accession>
<keyword id="KW-1185">Reference proteome</keyword>
<keyword id="KW-0808">Transferase</keyword>
<reference key="1">
    <citation type="journal article" date="2013" name="PLoS Genet.">
        <title>Plant-symbiotic fungi as chemical engineers: Multi-genome analysis of the Clavicipitaceae reveals dynamics of alkaloid loci.</title>
        <authorList>
            <person name="Schardl C.L."/>
            <person name="Young C.A."/>
            <person name="Hesse U."/>
            <person name="Amyotte S.G."/>
            <person name="Andreeva K."/>
            <person name="Calie P.J."/>
            <person name="Fleetwood D.J."/>
            <person name="Haws D.C."/>
            <person name="Moore N."/>
            <person name="Oeser B."/>
            <person name="Panaccione D.G."/>
            <person name="Schweri K.K."/>
            <person name="Voisey C.R."/>
            <person name="Farman M.L."/>
            <person name="Jaromczyk J.W."/>
            <person name="Roe B.A."/>
            <person name="O'Sullivan D.M."/>
            <person name="Scott B."/>
            <person name="Tudzynski P."/>
            <person name="An Z."/>
            <person name="Arnaoudova E.G."/>
            <person name="Bullock C.T."/>
            <person name="Charlton N.D."/>
            <person name="Chen L."/>
            <person name="Cox M."/>
            <person name="Dinkins R.D."/>
            <person name="Florea S."/>
            <person name="Glenn A.E."/>
            <person name="Gordon A."/>
            <person name="Gueldener U."/>
            <person name="Harris D.R."/>
            <person name="Hollin W."/>
            <person name="Jaromczyk J."/>
            <person name="Johnson R.D."/>
            <person name="Khan A.K."/>
            <person name="Leistner E."/>
            <person name="Leuchtmann A."/>
            <person name="Li C."/>
            <person name="Liu J."/>
            <person name="Liu J."/>
            <person name="Liu M."/>
            <person name="Mace W."/>
            <person name="Machado C."/>
            <person name="Nagabhyru P."/>
            <person name="Pan J."/>
            <person name="Schmid J."/>
            <person name="Sugawara K."/>
            <person name="Steiner U."/>
            <person name="Takach J.E."/>
            <person name="Tanaka E."/>
            <person name="Webb J.S."/>
            <person name="Wilson E.V."/>
            <person name="Wiseman J.L."/>
            <person name="Yoshida R."/>
            <person name="Zeng Z."/>
        </authorList>
    </citation>
    <scope>NUCLEOTIDE SEQUENCE [LARGE SCALE GENOMIC DNA]</scope>
    <source>
        <strain>20.1</strain>
    </source>
</reference>
<reference key="2">
    <citation type="journal article" date="2016" name="PLoS ONE">
        <title>The epipolythiodiketopiperazine gene cluster in Claviceps purpurea: dysfunctional cytochrome P450 enzyme prevents formation of the previously unknown clapurines.</title>
        <authorList>
            <person name="Dopstadt J."/>
            <person name="Neubauer L."/>
            <person name="Tudzynski P."/>
            <person name="Humpf H.U."/>
        </authorList>
    </citation>
    <scope>FUNCTION</scope>
    <scope>INDUCTION</scope>
</reference>